<gene>
    <name type="primary">HSPE1</name>
</gene>
<protein>
    <recommendedName>
        <fullName>10 kDa heat shock protein, mitochondrial</fullName>
        <shortName>Hsp10</shortName>
    </recommendedName>
    <alternativeName>
        <fullName>10 kDa chaperonin</fullName>
    </alternativeName>
    <alternativeName>
        <fullName>Chaperonin 10</fullName>
        <shortName>CPN10</shortName>
    </alternativeName>
    <alternativeName>
        <fullName>Early-pregnancy factor</fullName>
        <shortName>EPF</shortName>
    </alternativeName>
    <alternativeName>
        <fullName>Heat shock protein family E member 1</fullName>
    </alternativeName>
</protein>
<comment type="function">
    <text evidence="2 3 6 9">Co-chaperonin implicated in mitochondrial protein import and macromolecular assembly. Together with Hsp60, facilitates the correct folding of imported proteins. May also prevent misfolding and promote the refolding and proper assembly of unfolded polypeptides generated under stress conditions in the mitochondrial matrix (PubMed:11422376, PubMed:1346131, PubMed:7912672). The functional units of these chaperonins consist of heptameric rings of the large subunit Hsp60, which function as a back-to-back double ring. In a cyclic reaction, Hsp60 ring complexes bind one unfolded substrate protein per ring, followed by the binding of ATP and association with 2 heptameric rings of the co-chaperonin Hsp10. This leads to sequestration of the substrate protein in the inner cavity of Hsp60 where, for a certain period of time, it can fold undisturbed by other cell components. Synchronous hydrolysis of ATP in all Hsp60 subunits results in the dissociation of the chaperonin rings and the release of ADP and the folded substrate protein (Probable).</text>
</comment>
<comment type="subunit">
    <text evidence="5">Homoheptamer arranged in a ring structure (PubMed:25918392). 2 heptameric Hsp10 rings interact with a Hsp60 tetradecamer in the structure of a back-to-back double heptameric ring to form the symmetrical football complex (PubMed:25918392).</text>
</comment>
<comment type="interaction">
    <interactant intactId="EBI-711483">
        <id>P61604</id>
    </interactant>
    <interactant intactId="EBI-741158">
        <id>Q96HA8</id>
        <label>NTAQ1</label>
    </interactant>
    <organismsDiffer>false</organismsDiffer>
    <experiments>3</experiments>
</comment>
<comment type="interaction">
    <interactant intactId="EBI-711483">
        <id>P61604</id>
    </interactant>
    <interactant intactId="EBI-10277687">
        <id>Q8WWX9</id>
        <label>SELENOM</label>
    </interactant>
    <organismsDiffer>false</organismsDiffer>
    <experiments>3</experiments>
</comment>
<comment type="subcellular location">
    <subcellularLocation>
        <location>Mitochondrion matrix</location>
    </subcellularLocation>
</comment>
<comment type="induction">
    <text>By stress.</text>
</comment>
<comment type="mass spectrometry" mass="10843.5" error="0.2" method="Electrospray" evidence="6"/>
<comment type="similarity">
    <text evidence="8">Belongs to the GroES chaperonin family.</text>
</comment>
<organism>
    <name type="scientific">Homo sapiens</name>
    <name type="common">Human</name>
    <dbReference type="NCBI Taxonomy" id="9606"/>
    <lineage>
        <taxon>Eukaryota</taxon>
        <taxon>Metazoa</taxon>
        <taxon>Chordata</taxon>
        <taxon>Craniata</taxon>
        <taxon>Vertebrata</taxon>
        <taxon>Euteleostomi</taxon>
        <taxon>Mammalia</taxon>
        <taxon>Eutheria</taxon>
        <taxon>Euarchontoglires</taxon>
        <taxon>Primates</taxon>
        <taxon>Haplorrhini</taxon>
        <taxon>Catarrhini</taxon>
        <taxon>Hominidae</taxon>
        <taxon>Homo</taxon>
    </lineage>
</organism>
<feature type="initiator methionine" description="Removed" evidence="7">
    <location>
        <position position="1"/>
    </location>
</feature>
<feature type="chain" id="PRO_0000174917" description="10 kDa heat shock protein, mitochondrial">
    <location>
        <begin position="2"/>
        <end position="102"/>
    </location>
</feature>
<feature type="modified residue" description="N-acetylalanine" evidence="7">
    <location>
        <position position="2"/>
    </location>
</feature>
<feature type="modified residue" description="N6-acetyllysine" evidence="1">
    <location>
        <position position="8"/>
    </location>
</feature>
<feature type="modified residue" description="N6-succinyllysine" evidence="1">
    <location>
        <position position="28"/>
    </location>
</feature>
<feature type="modified residue" description="N6-acetyllysine; alternate" evidence="1">
    <location>
        <position position="40"/>
    </location>
</feature>
<feature type="modified residue" description="N6-malonyllysine; alternate" evidence="4">
    <location>
        <position position="40"/>
    </location>
</feature>
<feature type="modified residue" description="N6-succinyllysine; alternate" evidence="1">
    <location>
        <position position="40"/>
    </location>
</feature>
<feature type="modified residue" description="N6-malonyllysine; alternate" evidence="4">
    <location>
        <position position="54"/>
    </location>
</feature>
<feature type="modified residue" description="N6-succinyllysine; alternate" evidence="1">
    <location>
        <position position="54"/>
    </location>
</feature>
<feature type="modified residue" description="N6-acetyllysine; alternate" evidence="10">
    <location>
        <position position="56"/>
    </location>
</feature>
<feature type="modified residue" description="N6-malonyllysine; alternate" evidence="4">
    <location>
        <position position="56"/>
    </location>
</feature>
<feature type="modified residue" description="N6-succinyllysine; alternate" evidence="1">
    <location>
        <position position="56"/>
    </location>
</feature>
<feature type="modified residue" description="N6-acetyllysine; alternate" evidence="1">
    <location>
        <position position="66"/>
    </location>
</feature>
<feature type="modified residue" description="N6-succinyllysine; alternate" evidence="1">
    <location>
        <position position="66"/>
    </location>
</feature>
<feature type="modified residue" description="N6-acetyllysine; alternate" evidence="1">
    <location>
        <position position="70"/>
    </location>
</feature>
<feature type="modified residue" description="N6-succinyllysine; alternate" evidence="1">
    <location>
        <position position="70"/>
    </location>
</feature>
<feature type="modified residue" description="Phosphothreonine" evidence="11">
    <location>
        <position position="79"/>
    </location>
</feature>
<feature type="modified residue" description="N6-acetyllysine; alternate" evidence="1">
    <location>
        <position position="80"/>
    </location>
</feature>
<feature type="modified residue" description="N6-succinyllysine; alternate" evidence="1">
    <location>
        <position position="80"/>
    </location>
</feature>
<feature type="modified residue" description="N6-acetyllysine; alternate" evidence="10">
    <location>
        <position position="86"/>
    </location>
</feature>
<feature type="modified residue" description="N6-succinyllysine; alternate" evidence="1">
    <location>
        <position position="86"/>
    </location>
</feature>
<feature type="modified residue" description="N6-acetyllysine" evidence="10">
    <location>
        <position position="99"/>
    </location>
</feature>
<feature type="strand" evidence="12">
    <location>
        <begin position="9"/>
        <end position="11"/>
    </location>
</feature>
<feature type="strand" evidence="12">
    <location>
        <begin position="15"/>
        <end position="20"/>
    </location>
</feature>
<feature type="strand" evidence="12">
    <location>
        <begin position="28"/>
        <end position="30"/>
    </location>
</feature>
<feature type="turn" evidence="12">
    <location>
        <begin position="35"/>
        <end position="37"/>
    </location>
</feature>
<feature type="strand" evidence="12">
    <location>
        <begin position="43"/>
        <end position="49"/>
    </location>
</feature>
<feature type="strand" evidence="12">
    <location>
        <begin position="53"/>
        <end position="59"/>
    </location>
</feature>
<feature type="strand" evidence="12">
    <location>
        <begin position="70"/>
        <end position="72"/>
    </location>
</feature>
<feature type="strand" evidence="12">
    <location>
        <begin position="79"/>
        <end position="83"/>
    </location>
</feature>
<feature type="strand" evidence="12">
    <location>
        <begin position="86"/>
        <end position="92"/>
    </location>
</feature>
<feature type="turn" evidence="12">
    <location>
        <begin position="93"/>
        <end position="95"/>
    </location>
</feature>
<feature type="strand" evidence="12">
    <location>
        <begin position="98"/>
        <end position="100"/>
    </location>
</feature>
<proteinExistence type="evidence at protein level"/>
<keyword id="KW-0002">3D-structure</keyword>
<keyword id="KW-0007">Acetylation</keyword>
<keyword id="KW-0143">Chaperone</keyword>
<keyword id="KW-0903">Direct protein sequencing</keyword>
<keyword id="KW-0496">Mitochondrion</keyword>
<keyword id="KW-0597">Phosphoprotein</keyword>
<keyword id="KW-1267">Proteomics identification</keyword>
<keyword id="KW-1185">Reference proteome</keyword>
<keyword id="KW-0346">Stress response</keyword>
<name>CH10_HUMAN</name>
<accession>P61604</accession>
<accession>O95421</accession>
<accession>Q04984</accession>
<accession>Q53X54</accession>
<accession>Q9UDH0</accession>
<sequence length="102" mass="10932">MAGQAFRKFLPLFDRVLVERSAAETVTKGGIMLPEKSQGKVLQATVVAVGSGSKGKGGEIQPVSVKVGDKVLLPEYGGTKVVLDDKDYFLFRDGDILGKYVD</sequence>
<dbReference type="EMBL" id="X75821">
    <property type="protein sequence ID" value="CAA53455.1"/>
    <property type="molecule type" value="mRNA"/>
</dbReference>
<dbReference type="EMBL" id="U07550">
    <property type="protein sequence ID" value="AAA50953.1"/>
    <property type="molecule type" value="mRNA"/>
</dbReference>
<dbReference type="EMBL" id="AJ250915">
    <property type="protein sequence ID" value="CAB75425.1"/>
    <property type="molecule type" value="Genomic_DNA"/>
</dbReference>
<dbReference type="EMBL" id="AK312104">
    <property type="protein sequence ID" value="BAG35040.1"/>
    <property type="molecule type" value="mRNA"/>
</dbReference>
<dbReference type="EMBL" id="CR407688">
    <property type="protein sequence ID" value="CAG28616.1"/>
    <property type="molecule type" value="mRNA"/>
</dbReference>
<dbReference type="EMBL" id="AC020550">
    <property type="protein sequence ID" value="AAX93146.1"/>
    <property type="molecule type" value="Genomic_DNA"/>
</dbReference>
<dbReference type="EMBL" id="CH471063">
    <property type="protein sequence ID" value="EAW70163.1"/>
    <property type="molecule type" value="Genomic_DNA"/>
</dbReference>
<dbReference type="EMBL" id="BC023518">
    <property type="protein sequence ID" value="AAH23518.1"/>
    <property type="molecule type" value="mRNA"/>
</dbReference>
<dbReference type="EMBL" id="AH007060">
    <property type="protein sequence ID" value="AAC95387.1"/>
    <property type="molecule type" value="Genomic_DNA"/>
</dbReference>
<dbReference type="CCDS" id="CCDS2320.1"/>
<dbReference type="PIR" id="S47532">
    <property type="entry name" value="S47532"/>
</dbReference>
<dbReference type="RefSeq" id="NP_002148.1">
    <property type="nucleotide sequence ID" value="NM_002157.3"/>
</dbReference>
<dbReference type="PDB" id="4PJ1">
    <property type="method" value="X-ray"/>
    <property type="resolution" value="3.15 A"/>
    <property type="chains" value="1/2/O/P/Q/R/S/T/U/V/W/X/Y/Z=1-102"/>
</dbReference>
<dbReference type="PDB" id="6HT7">
    <property type="method" value="X-ray"/>
    <property type="resolution" value="3.70 A"/>
    <property type="chains" value="1/2/O/P/Q/R/S/T/U/V/W/X/Y/Z=1-102"/>
</dbReference>
<dbReference type="PDB" id="6MRC">
    <property type="method" value="EM"/>
    <property type="resolution" value="3.08 A"/>
    <property type="chains" value="1/2/O/P/Q/R/S/T/U/V/W/X/Y/Z=3-102"/>
</dbReference>
<dbReference type="PDB" id="6MRD">
    <property type="method" value="EM"/>
    <property type="resolution" value="3.82 A"/>
    <property type="chains" value="O/P/Q/R/S/T/U=3-102"/>
</dbReference>
<dbReference type="PDB" id="8G7N">
    <property type="method" value="EM"/>
    <property type="resolution" value="2.70 A"/>
    <property type="chains" value="1/2/M/O/P/Q/R/S/T/U/V/W/X/Z=1-102"/>
</dbReference>
<dbReference type="PDB" id="8G7O">
    <property type="method" value="EM"/>
    <property type="resolution" value="3.40 A"/>
    <property type="chains" value="H/I/J/K/L/M/N=3-102"/>
</dbReference>
<dbReference type="PDBsum" id="4PJ1"/>
<dbReference type="PDBsum" id="6HT7"/>
<dbReference type="PDBsum" id="6MRC"/>
<dbReference type="PDBsum" id="6MRD"/>
<dbReference type="PDBsum" id="8G7N"/>
<dbReference type="PDBsum" id="8G7O"/>
<dbReference type="EMDB" id="EMD-29817"/>
<dbReference type="EMDB" id="EMD-29818"/>
<dbReference type="EMDB" id="EMD-9195"/>
<dbReference type="EMDB" id="EMD-9196"/>
<dbReference type="SMR" id="P61604"/>
<dbReference type="BioGRID" id="109568">
    <property type="interactions" value="319"/>
</dbReference>
<dbReference type="FunCoup" id="P61604">
    <property type="interactions" value="1351"/>
</dbReference>
<dbReference type="IntAct" id="P61604">
    <property type="interactions" value="105"/>
</dbReference>
<dbReference type="MINT" id="P61604"/>
<dbReference type="STRING" id="9606.ENSP00000233893"/>
<dbReference type="ChEMBL" id="CHEMBL3808268"/>
<dbReference type="DrugBank" id="DB12695">
    <property type="generic name" value="Phenethyl Isothiocyanate"/>
</dbReference>
<dbReference type="GlyCosmos" id="P61604">
    <property type="glycosylation" value="1 site, 1 glycan"/>
</dbReference>
<dbReference type="GlyGen" id="P61604">
    <property type="glycosylation" value="1 site, 1 O-linked glycan (1 site)"/>
</dbReference>
<dbReference type="iPTMnet" id="P61604"/>
<dbReference type="MetOSite" id="P61604"/>
<dbReference type="PhosphoSitePlus" id="P61604"/>
<dbReference type="SwissPalm" id="P61604"/>
<dbReference type="BioMuta" id="HSPE1"/>
<dbReference type="DMDM" id="47606335"/>
<dbReference type="jPOST" id="P61604"/>
<dbReference type="MassIVE" id="P61604"/>
<dbReference type="PaxDb" id="9606-ENSP00000233893"/>
<dbReference type="PeptideAtlas" id="P61604"/>
<dbReference type="ProteomicsDB" id="57325"/>
<dbReference type="Pumba" id="P61604"/>
<dbReference type="TopDownProteomics" id="P61604"/>
<dbReference type="Antibodypedia" id="3376">
    <property type="antibodies" value="525 antibodies from 38 providers"/>
</dbReference>
<dbReference type="DNASU" id="3336"/>
<dbReference type="Ensembl" id="ENST00000233893.10">
    <property type="protein sequence ID" value="ENSP00000233893.5"/>
    <property type="gene ID" value="ENSG00000115541.11"/>
</dbReference>
<dbReference type="GeneID" id="3336"/>
<dbReference type="KEGG" id="hsa:3336"/>
<dbReference type="MANE-Select" id="ENST00000233893.10">
    <property type="protein sequence ID" value="ENSP00000233893.5"/>
    <property type="RefSeq nucleotide sequence ID" value="NM_002157.3"/>
    <property type="RefSeq protein sequence ID" value="NP_002148.1"/>
</dbReference>
<dbReference type="UCSC" id="uc002uul.4">
    <property type="organism name" value="human"/>
</dbReference>
<dbReference type="AGR" id="HGNC:5269"/>
<dbReference type="CTD" id="3336"/>
<dbReference type="DisGeNET" id="3336"/>
<dbReference type="GeneCards" id="HSPE1"/>
<dbReference type="HGNC" id="HGNC:5269">
    <property type="gene designation" value="HSPE1"/>
</dbReference>
<dbReference type="HPA" id="ENSG00000115541">
    <property type="expression patterns" value="Low tissue specificity"/>
</dbReference>
<dbReference type="MIM" id="600141">
    <property type="type" value="gene"/>
</dbReference>
<dbReference type="neXtProt" id="NX_P61604"/>
<dbReference type="OpenTargets" id="ENSG00000115541"/>
<dbReference type="PharmGKB" id="PA29535"/>
<dbReference type="VEuPathDB" id="HostDB:ENSG00000115541"/>
<dbReference type="eggNOG" id="KOG1641">
    <property type="taxonomic scope" value="Eukaryota"/>
</dbReference>
<dbReference type="GeneTree" id="ENSGT00390000006350"/>
<dbReference type="HOGENOM" id="CLU_132825_0_1_1"/>
<dbReference type="InParanoid" id="P61604"/>
<dbReference type="OMA" id="EDFLIMR"/>
<dbReference type="OrthoDB" id="9525814at2759"/>
<dbReference type="PAN-GO" id="P61604">
    <property type="GO annotations" value="5 GO annotations based on evolutionary models"/>
</dbReference>
<dbReference type="PhylomeDB" id="P61604"/>
<dbReference type="TreeFam" id="TF313814"/>
<dbReference type="PathwayCommons" id="P61604"/>
<dbReference type="Reactome" id="R-HSA-9013408">
    <property type="pathway name" value="RHOG GTPase cycle"/>
</dbReference>
<dbReference type="Reactome" id="R-HSA-9841251">
    <property type="pathway name" value="Mitochondrial unfolded protein response (UPRmt)"/>
</dbReference>
<dbReference type="SignaLink" id="P61604"/>
<dbReference type="BioGRID-ORCS" id="3336">
    <property type="hits" value="731 hits in 1050 CRISPR screens"/>
</dbReference>
<dbReference type="CD-CODE" id="91857CE7">
    <property type="entry name" value="Nucleolus"/>
</dbReference>
<dbReference type="ChiTaRS" id="HSPE1">
    <property type="organism name" value="human"/>
</dbReference>
<dbReference type="EvolutionaryTrace" id="P61604"/>
<dbReference type="GeneWiki" id="GroES"/>
<dbReference type="GenomeRNAi" id="3336"/>
<dbReference type="Pharos" id="P61604">
    <property type="development level" value="Tbio"/>
</dbReference>
<dbReference type="PRO" id="PR:P61604"/>
<dbReference type="Proteomes" id="UP000005640">
    <property type="component" value="Chromosome 2"/>
</dbReference>
<dbReference type="RNAct" id="P61604">
    <property type="molecule type" value="protein"/>
</dbReference>
<dbReference type="Bgee" id="ENSG00000115541">
    <property type="expression patterns" value="Expressed in adrenal tissue and 101 other cell types or tissues"/>
</dbReference>
<dbReference type="ExpressionAtlas" id="P61604">
    <property type="expression patterns" value="baseline and differential"/>
</dbReference>
<dbReference type="GO" id="GO:0070062">
    <property type="term" value="C:extracellular exosome"/>
    <property type="evidence" value="ECO:0007005"/>
    <property type="project" value="UniProtKB"/>
</dbReference>
<dbReference type="GO" id="GO:0016020">
    <property type="term" value="C:membrane"/>
    <property type="evidence" value="ECO:0007005"/>
    <property type="project" value="UniProtKB"/>
</dbReference>
<dbReference type="GO" id="GO:0005759">
    <property type="term" value="C:mitochondrial matrix"/>
    <property type="evidence" value="ECO:0000318"/>
    <property type="project" value="GO_Central"/>
</dbReference>
<dbReference type="GO" id="GO:0005739">
    <property type="term" value="C:mitochondrion"/>
    <property type="evidence" value="ECO:0000314"/>
    <property type="project" value="UniProtKB"/>
</dbReference>
<dbReference type="GO" id="GO:0005524">
    <property type="term" value="F:ATP binding"/>
    <property type="evidence" value="ECO:0007669"/>
    <property type="project" value="InterPro"/>
</dbReference>
<dbReference type="GO" id="GO:0046872">
    <property type="term" value="F:metal ion binding"/>
    <property type="evidence" value="ECO:0000318"/>
    <property type="project" value="GO_Central"/>
</dbReference>
<dbReference type="GO" id="GO:0044183">
    <property type="term" value="F:protein folding chaperone"/>
    <property type="evidence" value="ECO:0007669"/>
    <property type="project" value="InterPro"/>
</dbReference>
<dbReference type="GO" id="GO:0051087">
    <property type="term" value="F:protein-folding chaperone binding"/>
    <property type="evidence" value="ECO:0000353"/>
    <property type="project" value="UniProtKB"/>
</dbReference>
<dbReference type="GO" id="GO:0003723">
    <property type="term" value="F:RNA binding"/>
    <property type="evidence" value="ECO:0007005"/>
    <property type="project" value="UniProtKB"/>
</dbReference>
<dbReference type="GO" id="GO:0051082">
    <property type="term" value="F:unfolded protein binding"/>
    <property type="evidence" value="ECO:0000318"/>
    <property type="project" value="GO_Central"/>
</dbReference>
<dbReference type="GO" id="GO:0051085">
    <property type="term" value="P:chaperone cofactor-dependent protein refolding"/>
    <property type="evidence" value="ECO:0000318"/>
    <property type="project" value="GO_Central"/>
</dbReference>
<dbReference type="GO" id="GO:0097193">
    <property type="term" value="P:intrinsic apoptotic signaling pathway"/>
    <property type="evidence" value="ECO:0000303"/>
    <property type="project" value="UniProtKB"/>
</dbReference>
<dbReference type="GO" id="GO:0001649">
    <property type="term" value="P:osteoblast differentiation"/>
    <property type="evidence" value="ECO:0007005"/>
    <property type="project" value="UniProtKB"/>
</dbReference>
<dbReference type="GO" id="GO:0006457">
    <property type="term" value="P:protein folding"/>
    <property type="evidence" value="ECO:0000304"/>
    <property type="project" value="ProtInc"/>
</dbReference>
<dbReference type="GO" id="GO:0006986">
    <property type="term" value="P:response to unfolded protein"/>
    <property type="evidence" value="ECO:0000304"/>
    <property type="project" value="ProtInc"/>
</dbReference>
<dbReference type="CDD" id="cd00320">
    <property type="entry name" value="cpn10"/>
    <property type="match status" value="1"/>
</dbReference>
<dbReference type="FunFam" id="2.30.33.40:FF:000002">
    <property type="entry name" value="10 kDa chaperonin, mitochondrial"/>
    <property type="match status" value="1"/>
</dbReference>
<dbReference type="Gene3D" id="2.30.33.40">
    <property type="entry name" value="GroES chaperonin"/>
    <property type="match status" value="1"/>
</dbReference>
<dbReference type="HAMAP" id="MF_00580">
    <property type="entry name" value="CH10"/>
    <property type="match status" value="1"/>
</dbReference>
<dbReference type="InterPro" id="IPR020818">
    <property type="entry name" value="Chaperonin_GroES"/>
</dbReference>
<dbReference type="InterPro" id="IPR037124">
    <property type="entry name" value="Chaperonin_GroES_sf"/>
</dbReference>
<dbReference type="InterPro" id="IPR018369">
    <property type="entry name" value="Chaprnonin_Cpn10_CS"/>
</dbReference>
<dbReference type="InterPro" id="IPR011032">
    <property type="entry name" value="GroES-like_sf"/>
</dbReference>
<dbReference type="PANTHER" id="PTHR10772">
    <property type="entry name" value="10 KDA HEAT SHOCK PROTEIN"/>
    <property type="match status" value="1"/>
</dbReference>
<dbReference type="PANTHER" id="PTHR10772:SF0">
    <property type="entry name" value="10 KDA HEAT SHOCK PROTEIN, MITOCHONDRIAL"/>
    <property type="match status" value="1"/>
</dbReference>
<dbReference type="Pfam" id="PF00166">
    <property type="entry name" value="Cpn10"/>
    <property type="match status" value="1"/>
</dbReference>
<dbReference type="PRINTS" id="PR00297">
    <property type="entry name" value="CHAPERONIN10"/>
</dbReference>
<dbReference type="SMART" id="SM00883">
    <property type="entry name" value="Cpn10"/>
    <property type="match status" value="1"/>
</dbReference>
<dbReference type="SUPFAM" id="SSF50129">
    <property type="entry name" value="GroES-like"/>
    <property type="match status" value="1"/>
</dbReference>
<dbReference type="PROSITE" id="PS00681">
    <property type="entry name" value="CHAPERONINS_CPN10"/>
    <property type="match status" value="1"/>
</dbReference>
<evidence type="ECO:0000250" key="1">
    <source>
        <dbReference type="UniProtKB" id="Q64433"/>
    </source>
</evidence>
<evidence type="ECO:0000269" key="2">
    <source>
    </source>
</evidence>
<evidence type="ECO:0000269" key="3">
    <source>
    </source>
</evidence>
<evidence type="ECO:0000269" key="4">
    <source>
    </source>
</evidence>
<evidence type="ECO:0000269" key="5">
    <source>
    </source>
</evidence>
<evidence type="ECO:0000269" key="6">
    <source>
    </source>
</evidence>
<evidence type="ECO:0000269" key="7">
    <source ref="10"/>
</evidence>
<evidence type="ECO:0000305" key="8"/>
<evidence type="ECO:0000305" key="9">
    <source>
    </source>
</evidence>
<evidence type="ECO:0007744" key="10">
    <source>
    </source>
</evidence>
<evidence type="ECO:0007744" key="11">
    <source>
    </source>
</evidence>
<evidence type="ECO:0007829" key="12">
    <source>
        <dbReference type="PDB" id="8G7N"/>
    </source>
</evidence>
<reference key="1">
    <citation type="journal article" date="1994" name="Biochim. Biophys. Acta">
        <title>Identification and cloning of human chaperonin 10 homologue.</title>
        <authorList>
            <person name="Monzini N."/>
            <person name="Legname G."/>
            <person name="Marcucci F."/>
            <person name="Gromo G."/>
            <person name="Modena D."/>
        </authorList>
    </citation>
    <scope>NUCLEOTIDE SEQUENCE [MRNA]</scope>
</reference>
<reference key="2">
    <citation type="journal article" date="1994" name="Biochim. Biophys. Acta">
        <title>Isolation, sequence analysis and characterization of a cDNA encoding human chaperonin 10.</title>
        <authorList>
            <person name="Chen J.J."/>
            <person name="McNealy D.J."/>
            <person name="Dalal S."/>
            <person name="Androphy E.J."/>
        </authorList>
    </citation>
    <scope>NUCLEOTIDE SEQUENCE [MRNA]</scope>
</reference>
<reference key="3">
    <citation type="journal article" date="2003" name="Hum. Genet.">
        <title>Genomic structure of the human mitochondrial chaperonin genes: HSP60 and HSP10 are localised head to head on chromosome 2 separated by a bidirectional promoter.</title>
        <authorList>
            <person name="Hansen J.J."/>
            <person name="Bross P."/>
            <person name="Westergaard M."/>
            <person name="Nielsen M.N."/>
            <person name="Eiberg H."/>
            <person name="Boerglum A.D."/>
            <person name="Mogensen J."/>
            <person name="Kristiansen K."/>
            <person name="Bolund L."/>
            <person name="Gregersen N."/>
        </authorList>
    </citation>
    <scope>NUCLEOTIDE SEQUENCE [GENOMIC DNA]</scope>
</reference>
<reference key="4">
    <citation type="journal article" date="2004" name="Nat. Genet.">
        <title>Complete sequencing and characterization of 21,243 full-length human cDNAs.</title>
        <authorList>
            <person name="Ota T."/>
            <person name="Suzuki Y."/>
            <person name="Nishikawa T."/>
            <person name="Otsuki T."/>
            <person name="Sugiyama T."/>
            <person name="Irie R."/>
            <person name="Wakamatsu A."/>
            <person name="Hayashi K."/>
            <person name="Sato H."/>
            <person name="Nagai K."/>
            <person name="Kimura K."/>
            <person name="Makita H."/>
            <person name="Sekine M."/>
            <person name="Obayashi M."/>
            <person name="Nishi T."/>
            <person name="Shibahara T."/>
            <person name="Tanaka T."/>
            <person name="Ishii S."/>
            <person name="Yamamoto J."/>
            <person name="Saito K."/>
            <person name="Kawai Y."/>
            <person name="Isono Y."/>
            <person name="Nakamura Y."/>
            <person name="Nagahari K."/>
            <person name="Murakami K."/>
            <person name="Yasuda T."/>
            <person name="Iwayanagi T."/>
            <person name="Wagatsuma M."/>
            <person name="Shiratori A."/>
            <person name="Sudo H."/>
            <person name="Hosoiri T."/>
            <person name="Kaku Y."/>
            <person name="Kodaira H."/>
            <person name="Kondo H."/>
            <person name="Sugawara M."/>
            <person name="Takahashi M."/>
            <person name="Kanda K."/>
            <person name="Yokoi T."/>
            <person name="Furuya T."/>
            <person name="Kikkawa E."/>
            <person name="Omura Y."/>
            <person name="Abe K."/>
            <person name="Kamihara K."/>
            <person name="Katsuta N."/>
            <person name="Sato K."/>
            <person name="Tanikawa M."/>
            <person name="Yamazaki M."/>
            <person name="Ninomiya K."/>
            <person name="Ishibashi T."/>
            <person name="Yamashita H."/>
            <person name="Murakawa K."/>
            <person name="Fujimori K."/>
            <person name="Tanai H."/>
            <person name="Kimata M."/>
            <person name="Watanabe M."/>
            <person name="Hiraoka S."/>
            <person name="Chiba Y."/>
            <person name="Ishida S."/>
            <person name="Ono Y."/>
            <person name="Takiguchi S."/>
            <person name="Watanabe S."/>
            <person name="Yosida M."/>
            <person name="Hotuta T."/>
            <person name="Kusano J."/>
            <person name="Kanehori K."/>
            <person name="Takahashi-Fujii A."/>
            <person name="Hara H."/>
            <person name="Tanase T.-O."/>
            <person name="Nomura Y."/>
            <person name="Togiya S."/>
            <person name="Komai F."/>
            <person name="Hara R."/>
            <person name="Takeuchi K."/>
            <person name="Arita M."/>
            <person name="Imose N."/>
            <person name="Musashino K."/>
            <person name="Yuuki H."/>
            <person name="Oshima A."/>
            <person name="Sasaki N."/>
            <person name="Aotsuka S."/>
            <person name="Yoshikawa Y."/>
            <person name="Matsunawa H."/>
            <person name="Ichihara T."/>
            <person name="Shiohata N."/>
            <person name="Sano S."/>
            <person name="Moriya S."/>
            <person name="Momiyama H."/>
            <person name="Satoh N."/>
            <person name="Takami S."/>
            <person name="Terashima Y."/>
            <person name="Suzuki O."/>
            <person name="Nakagawa S."/>
            <person name="Senoh A."/>
            <person name="Mizoguchi H."/>
            <person name="Goto Y."/>
            <person name="Shimizu F."/>
            <person name="Wakebe H."/>
            <person name="Hishigaki H."/>
            <person name="Watanabe T."/>
            <person name="Sugiyama A."/>
            <person name="Takemoto M."/>
            <person name="Kawakami B."/>
            <person name="Yamazaki M."/>
            <person name="Watanabe K."/>
            <person name="Kumagai A."/>
            <person name="Itakura S."/>
            <person name="Fukuzumi Y."/>
            <person name="Fujimori Y."/>
            <person name="Komiyama M."/>
            <person name="Tashiro H."/>
            <person name="Tanigami A."/>
            <person name="Fujiwara T."/>
            <person name="Ono T."/>
            <person name="Yamada K."/>
            <person name="Fujii Y."/>
            <person name="Ozaki K."/>
            <person name="Hirao M."/>
            <person name="Ohmori Y."/>
            <person name="Kawabata A."/>
            <person name="Hikiji T."/>
            <person name="Kobatake N."/>
            <person name="Inagaki H."/>
            <person name="Ikema Y."/>
            <person name="Okamoto S."/>
            <person name="Okitani R."/>
            <person name="Kawakami T."/>
            <person name="Noguchi S."/>
            <person name="Itoh T."/>
            <person name="Shigeta K."/>
            <person name="Senba T."/>
            <person name="Matsumura K."/>
            <person name="Nakajima Y."/>
            <person name="Mizuno T."/>
            <person name="Morinaga M."/>
            <person name="Sasaki M."/>
            <person name="Togashi T."/>
            <person name="Oyama M."/>
            <person name="Hata H."/>
            <person name="Watanabe M."/>
            <person name="Komatsu T."/>
            <person name="Mizushima-Sugano J."/>
            <person name="Satoh T."/>
            <person name="Shirai Y."/>
            <person name="Takahashi Y."/>
            <person name="Nakagawa K."/>
            <person name="Okumura K."/>
            <person name="Nagase T."/>
            <person name="Nomura N."/>
            <person name="Kikuchi H."/>
            <person name="Masuho Y."/>
            <person name="Yamashita R."/>
            <person name="Nakai K."/>
            <person name="Yada T."/>
            <person name="Nakamura Y."/>
            <person name="Ohara O."/>
            <person name="Isogai T."/>
            <person name="Sugano S."/>
        </authorList>
    </citation>
    <scope>NUCLEOTIDE SEQUENCE [LARGE SCALE MRNA]</scope>
    <source>
        <tissue>Brain</tissue>
    </source>
</reference>
<reference key="5">
    <citation type="submission" date="2004-05" db="EMBL/GenBank/DDBJ databases">
        <title>Cloning of human full open reading frames in Gateway(TM) system entry vector (pDONR201).</title>
        <authorList>
            <person name="Ebert L."/>
            <person name="Schick M."/>
            <person name="Neubert P."/>
            <person name="Schatten R."/>
            <person name="Henze S."/>
            <person name="Korn B."/>
        </authorList>
    </citation>
    <scope>NUCLEOTIDE SEQUENCE [LARGE SCALE MRNA]</scope>
</reference>
<reference key="6">
    <citation type="journal article" date="2005" name="Nature">
        <title>Generation and annotation of the DNA sequences of human chromosomes 2 and 4.</title>
        <authorList>
            <person name="Hillier L.W."/>
            <person name="Graves T.A."/>
            <person name="Fulton R.S."/>
            <person name="Fulton L.A."/>
            <person name="Pepin K.H."/>
            <person name="Minx P."/>
            <person name="Wagner-McPherson C."/>
            <person name="Layman D."/>
            <person name="Wylie K."/>
            <person name="Sekhon M."/>
            <person name="Becker M.C."/>
            <person name="Fewell G.A."/>
            <person name="Delehaunty K.D."/>
            <person name="Miner T.L."/>
            <person name="Nash W.E."/>
            <person name="Kremitzki C."/>
            <person name="Oddy L."/>
            <person name="Du H."/>
            <person name="Sun H."/>
            <person name="Bradshaw-Cordum H."/>
            <person name="Ali J."/>
            <person name="Carter J."/>
            <person name="Cordes M."/>
            <person name="Harris A."/>
            <person name="Isak A."/>
            <person name="van Brunt A."/>
            <person name="Nguyen C."/>
            <person name="Du F."/>
            <person name="Courtney L."/>
            <person name="Kalicki J."/>
            <person name="Ozersky P."/>
            <person name="Abbott S."/>
            <person name="Armstrong J."/>
            <person name="Belter E.A."/>
            <person name="Caruso L."/>
            <person name="Cedroni M."/>
            <person name="Cotton M."/>
            <person name="Davidson T."/>
            <person name="Desai A."/>
            <person name="Elliott G."/>
            <person name="Erb T."/>
            <person name="Fronick C."/>
            <person name="Gaige T."/>
            <person name="Haakenson W."/>
            <person name="Haglund K."/>
            <person name="Holmes A."/>
            <person name="Harkins R."/>
            <person name="Kim K."/>
            <person name="Kruchowski S.S."/>
            <person name="Strong C.M."/>
            <person name="Grewal N."/>
            <person name="Goyea E."/>
            <person name="Hou S."/>
            <person name="Levy A."/>
            <person name="Martinka S."/>
            <person name="Mead K."/>
            <person name="McLellan M.D."/>
            <person name="Meyer R."/>
            <person name="Randall-Maher J."/>
            <person name="Tomlinson C."/>
            <person name="Dauphin-Kohlberg S."/>
            <person name="Kozlowicz-Reilly A."/>
            <person name="Shah N."/>
            <person name="Swearengen-Shahid S."/>
            <person name="Snider J."/>
            <person name="Strong J.T."/>
            <person name="Thompson J."/>
            <person name="Yoakum M."/>
            <person name="Leonard S."/>
            <person name="Pearman C."/>
            <person name="Trani L."/>
            <person name="Radionenko M."/>
            <person name="Waligorski J.E."/>
            <person name="Wang C."/>
            <person name="Rock S.M."/>
            <person name="Tin-Wollam A.-M."/>
            <person name="Maupin R."/>
            <person name="Latreille P."/>
            <person name="Wendl M.C."/>
            <person name="Yang S.-P."/>
            <person name="Pohl C."/>
            <person name="Wallis J.W."/>
            <person name="Spieth J."/>
            <person name="Bieri T.A."/>
            <person name="Berkowicz N."/>
            <person name="Nelson J.O."/>
            <person name="Osborne J."/>
            <person name="Ding L."/>
            <person name="Meyer R."/>
            <person name="Sabo A."/>
            <person name="Shotland Y."/>
            <person name="Sinha P."/>
            <person name="Wohldmann P.E."/>
            <person name="Cook L.L."/>
            <person name="Hickenbotham M.T."/>
            <person name="Eldred J."/>
            <person name="Williams D."/>
            <person name="Jones T.A."/>
            <person name="She X."/>
            <person name="Ciccarelli F.D."/>
            <person name="Izaurralde E."/>
            <person name="Taylor J."/>
            <person name="Schmutz J."/>
            <person name="Myers R.M."/>
            <person name="Cox D.R."/>
            <person name="Huang X."/>
            <person name="McPherson J.D."/>
            <person name="Mardis E.R."/>
            <person name="Clifton S.W."/>
            <person name="Warren W.C."/>
            <person name="Chinwalla A.T."/>
            <person name="Eddy S.R."/>
            <person name="Marra M.A."/>
            <person name="Ovcharenko I."/>
            <person name="Furey T.S."/>
            <person name="Miller W."/>
            <person name="Eichler E.E."/>
            <person name="Bork P."/>
            <person name="Suyama M."/>
            <person name="Torrents D."/>
            <person name="Waterston R.H."/>
            <person name="Wilson R.K."/>
        </authorList>
    </citation>
    <scope>NUCLEOTIDE SEQUENCE [LARGE SCALE GENOMIC DNA]</scope>
</reference>
<reference key="7">
    <citation type="submission" date="2005-07" db="EMBL/GenBank/DDBJ databases">
        <authorList>
            <person name="Mural R.J."/>
            <person name="Istrail S."/>
            <person name="Sutton G.G."/>
            <person name="Florea L."/>
            <person name="Halpern A.L."/>
            <person name="Mobarry C.M."/>
            <person name="Lippert R."/>
            <person name="Walenz B."/>
            <person name="Shatkay H."/>
            <person name="Dew I."/>
            <person name="Miller J.R."/>
            <person name="Flanigan M.J."/>
            <person name="Edwards N.J."/>
            <person name="Bolanos R."/>
            <person name="Fasulo D."/>
            <person name="Halldorsson B.V."/>
            <person name="Hannenhalli S."/>
            <person name="Turner R."/>
            <person name="Yooseph S."/>
            <person name="Lu F."/>
            <person name="Nusskern D.R."/>
            <person name="Shue B.C."/>
            <person name="Zheng X.H."/>
            <person name="Zhong F."/>
            <person name="Delcher A.L."/>
            <person name="Huson D.H."/>
            <person name="Kravitz S.A."/>
            <person name="Mouchard L."/>
            <person name="Reinert K."/>
            <person name="Remington K.A."/>
            <person name="Clark A.G."/>
            <person name="Waterman M.S."/>
            <person name="Eichler E.E."/>
            <person name="Adams M.D."/>
            <person name="Hunkapiller M.W."/>
            <person name="Myers E.W."/>
            <person name="Venter J.C."/>
        </authorList>
    </citation>
    <scope>NUCLEOTIDE SEQUENCE [LARGE SCALE GENOMIC DNA]</scope>
</reference>
<reference key="8">
    <citation type="journal article" date="2004" name="Genome Res.">
        <title>The status, quality, and expansion of the NIH full-length cDNA project: the Mammalian Gene Collection (MGC).</title>
        <authorList>
            <consortium name="The MGC Project Team"/>
        </authorList>
    </citation>
    <scope>NUCLEOTIDE SEQUENCE [LARGE SCALE MRNA]</scope>
    <source>
        <tissue>Uterus</tissue>
    </source>
</reference>
<reference key="9">
    <citation type="journal article" date="1998" name="Somat. Cell Mol. Genet.">
        <title>Mapping and characterization of the eukaryotic early pregnancy factor/chaperonin 10 gene family.</title>
        <authorList>
            <person name="Summers K.M."/>
            <person name="Fletcher B.H."/>
            <person name="Macaranas D.D."/>
            <person name="Somodevilla-Torres M.J."/>
            <person name="Murphy R.M."/>
            <person name="Osborne M.J."/>
            <person name="Spurr N.K."/>
            <person name="Cassady A.I."/>
            <person name="Cavanagh A.C."/>
        </authorList>
    </citation>
    <scope>NUCLEOTIDE SEQUENCE [GENOMIC DNA] OF 1-100</scope>
</reference>
<reference key="10">
    <citation type="submission" date="2005-03" db="UniProtKB">
        <authorList>
            <person name="Bienvenut W.V."/>
        </authorList>
    </citation>
    <scope>PROTEIN SEQUENCE OF 2-15; 41-54; 57-66 AND 81-92</scope>
    <scope>CLEAVAGE OF INITIATOR METHIONINE</scope>
    <scope>ACETYLATION AT ALA-2</scope>
    <scope>IDENTIFICATION BY MASS SPECTROMETRY</scope>
    <source>
        <tissue>B-cell lymphoma</tissue>
    </source>
</reference>
<reference key="11">
    <citation type="journal article" date="1994" name="Eur. J. Biochem.">
        <title>The purification of early-pregnancy factor to homogeneity from human platelets and identification as chaperonin 10.</title>
        <authorList>
            <person name="Cavanagh A.C."/>
            <person name="Morton H."/>
        </authorList>
    </citation>
    <scope>PROTEIN SEQUENCE OF 8-19; 28-54 AND 70-102</scope>
    <scope>MASS SPECTROMETRY</scope>
    <scope>FUNCTION</scope>
    <source>
        <tissue>Platelet</tissue>
    </source>
</reference>
<reference key="12">
    <citation type="journal article" date="1992" name="J. Biol. Chem.">
        <title>Mammalian mitochondrial chaperonin 60 functions as a single toroidal ring.</title>
        <authorList>
            <person name="Viitanen P.V."/>
            <person name="Lorimer G.H."/>
            <person name="Seetharam R."/>
            <person name="Gupta R.S."/>
            <person name="Oppenheim J."/>
            <person name="Thomas J.O."/>
            <person name="Cowan N.J."/>
        </authorList>
    </citation>
    <scope>FUNCTION</scope>
</reference>
<reference key="13">
    <citation type="journal article" date="2001" name="Eur. J. Biochem.">
        <title>The effect of nucleotides and mitochondrial chaperonin 10 on the structure and chaperone activity of mitochondrial chaperonin 60.</title>
        <authorList>
            <person name="Levy-Rimler G."/>
            <person name="Viitanen P."/>
            <person name="Weiss C."/>
            <person name="Sharkia R."/>
            <person name="Greenberg A."/>
            <person name="Niv A."/>
            <person name="Lustig A."/>
            <person name="Delarea Y."/>
            <person name="Azem A."/>
        </authorList>
    </citation>
    <scope>FUNCTION</scope>
</reference>
<reference key="14">
    <citation type="journal article" date="2009" name="Science">
        <title>Lysine acetylation targets protein complexes and co-regulates major cellular functions.</title>
        <authorList>
            <person name="Choudhary C."/>
            <person name="Kumar C."/>
            <person name="Gnad F."/>
            <person name="Nielsen M.L."/>
            <person name="Rehman M."/>
            <person name="Walther T.C."/>
            <person name="Olsen J.V."/>
            <person name="Mann M."/>
        </authorList>
    </citation>
    <scope>ACETYLATION [LARGE SCALE ANALYSIS] AT LYS-56; LYS-86 AND LYS-99</scope>
    <scope>IDENTIFICATION BY MASS SPECTROMETRY [LARGE SCALE ANALYSIS]</scope>
</reference>
<reference key="15">
    <citation type="journal article" date="2010" name="Sci. Signal.">
        <title>Quantitative phosphoproteomics reveals widespread full phosphorylation site occupancy during mitosis.</title>
        <authorList>
            <person name="Olsen J.V."/>
            <person name="Vermeulen M."/>
            <person name="Santamaria A."/>
            <person name="Kumar C."/>
            <person name="Miller M.L."/>
            <person name="Jensen L.J."/>
            <person name="Gnad F."/>
            <person name="Cox J."/>
            <person name="Jensen T.S."/>
            <person name="Nigg E.A."/>
            <person name="Brunak S."/>
            <person name="Mann M."/>
        </authorList>
    </citation>
    <scope>PHOSPHORYLATION [LARGE SCALE ANALYSIS] AT THR-79</scope>
    <scope>IDENTIFICATION BY MASS SPECTROMETRY [LARGE SCALE ANALYSIS]</scope>
    <source>
        <tissue>Cervix carcinoma</tissue>
    </source>
</reference>
<reference key="16">
    <citation type="journal article" date="2011" name="BMC Syst. Biol.">
        <title>Initial characterization of the human central proteome.</title>
        <authorList>
            <person name="Burkard T.R."/>
            <person name="Planyavsky M."/>
            <person name="Kaupe I."/>
            <person name="Breitwieser F.P."/>
            <person name="Buerckstuemmer T."/>
            <person name="Bennett K.L."/>
            <person name="Superti-Furga G."/>
            <person name="Colinge J."/>
        </authorList>
    </citation>
    <scope>IDENTIFICATION BY MASS SPECTROMETRY [LARGE SCALE ANALYSIS]</scope>
</reference>
<reference key="17">
    <citation type="journal article" date="2011" name="Mol. Cell. Proteomics">
        <title>The first identification of lysine malonylation substrates and its regulatory enzyme.</title>
        <authorList>
            <person name="Peng C."/>
            <person name="Lu Z."/>
            <person name="Xie Z."/>
            <person name="Cheng Z."/>
            <person name="Chen Y."/>
            <person name="Tan M."/>
            <person name="Luo H."/>
            <person name="Zhang Y."/>
            <person name="He W."/>
            <person name="Yang K."/>
            <person name="Zwaans B.M."/>
            <person name="Tishkoff D."/>
            <person name="Ho L."/>
            <person name="Lombard D."/>
            <person name="He T.C."/>
            <person name="Dai J."/>
            <person name="Verdin E."/>
            <person name="Ye Y."/>
            <person name="Zhao Y."/>
        </authorList>
    </citation>
    <scope>MALONYLATION AT LYS-40; LYS-54 AND LYS-56</scope>
</reference>
<reference key="18">
    <citation type="journal article" date="2014" name="J. Proteomics">
        <title>An enzyme assisted RP-RPLC approach for in-depth analysis of human liver phosphoproteome.</title>
        <authorList>
            <person name="Bian Y."/>
            <person name="Song C."/>
            <person name="Cheng K."/>
            <person name="Dong M."/>
            <person name="Wang F."/>
            <person name="Huang J."/>
            <person name="Sun D."/>
            <person name="Wang L."/>
            <person name="Ye M."/>
            <person name="Zou H."/>
        </authorList>
    </citation>
    <scope>IDENTIFICATION BY MASS SPECTROMETRY [LARGE SCALE ANALYSIS]</scope>
    <source>
        <tissue>Liver</tissue>
    </source>
</reference>
<reference key="19">
    <citation type="journal article" date="2015" name="Proteomics">
        <title>N-terminome analysis of the human mitochondrial proteome.</title>
        <authorList>
            <person name="Vaca Jacome A.S."/>
            <person name="Rabilloud T."/>
            <person name="Schaeffer-Reiss C."/>
            <person name="Rompais M."/>
            <person name="Ayoub D."/>
            <person name="Lane L."/>
            <person name="Bairoch A."/>
            <person name="Van Dorsselaer A."/>
            <person name="Carapito C."/>
        </authorList>
    </citation>
    <scope>IDENTIFICATION BY MASS SPECTROMETRY [LARGE SCALE ANALYSIS]</scope>
</reference>
<reference key="20">
    <citation type="journal article" date="2015" name="Proc. Natl. Acad. Sci. U.S.A.">
        <title>Crystal structure of the human mitochondrial chaperonin symmetrical football complex.</title>
        <authorList>
            <person name="Nisemblat S."/>
            <person name="Yaniv O."/>
            <person name="Parnas A."/>
            <person name="Frolow F."/>
            <person name="Azem A."/>
        </authorList>
    </citation>
    <scope>X-RAY CRYSTALLOGRAPHY (3.15 ANGSTROMS)</scope>
    <scope>SUBUNIT</scope>
    <scope>FUNCTION</scope>
</reference>